<dbReference type="EMBL" id="AC005312">
    <property type="protein sequence ID" value="AAC78513.1"/>
    <property type="molecule type" value="Genomic_DNA"/>
</dbReference>
<dbReference type="EMBL" id="CP002685">
    <property type="protein sequence ID" value="AEC05564.1"/>
    <property type="molecule type" value="Genomic_DNA"/>
</dbReference>
<dbReference type="EMBL" id="AY219138">
    <property type="protein sequence ID" value="AAO37225.1"/>
    <property type="molecule type" value="mRNA"/>
</dbReference>
<dbReference type="EMBL" id="BT026045">
    <property type="protein sequence ID" value="ABG48401.1"/>
    <property type="molecule type" value="mRNA"/>
</dbReference>
<dbReference type="PIR" id="B84435">
    <property type="entry name" value="B84435"/>
</dbReference>
<dbReference type="SMR" id="Q9ZVR1"/>
<dbReference type="BioGRID" id="164">
    <property type="interactions" value="3"/>
</dbReference>
<dbReference type="IntAct" id="Q9ZVR1">
    <property type="interactions" value="3"/>
</dbReference>
<dbReference type="PaxDb" id="3702-AT2G02300.1"/>
<dbReference type="EnsemblPlants" id="AT2G02300.1">
    <property type="protein sequence ID" value="AT2G02300.1"/>
    <property type="gene ID" value="AT2G02300"/>
</dbReference>
<dbReference type="GeneID" id="814761"/>
<dbReference type="Gramene" id="AT2G02300.1">
    <property type="protein sequence ID" value="AT2G02300.1"/>
    <property type="gene ID" value="AT2G02300"/>
</dbReference>
<dbReference type="KEGG" id="ath:AT2G02300"/>
<dbReference type="Araport" id="AT2G02300"/>
<dbReference type="TAIR" id="AT2G02300">
    <property type="gene designation" value="PP2-B5"/>
</dbReference>
<dbReference type="eggNOG" id="ENOG502QRA4">
    <property type="taxonomic scope" value="Eukaryota"/>
</dbReference>
<dbReference type="HOGENOM" id="CLU_050973_0_0_1"/>
<dbReference type="InParanoid" id="Q9ZVR1"/>
<dbReference type="OMA" id="DACRCCA"/>
<dbReference type="PhylomeDB" id="Q9ZVR1"/>
<dbReference type="PRO" id="PR:Q9ZVR1"/>
<dbReference type="Proteomes" id="UP000006548">
    <property type="component" value="Chromosome 2"/>
</dbReference>
<dbReference type="ExpressionAtlas" id="Q9ZVR1">
    <property type="expression patterns" value="baseline and differential"/>
</dbReference>
<dbReference type="GO" id="GO:0030246">
    <property type="term" value="F:carbohydrate binding"/>
    <property type="evidence" value="ECO:0000250"/>
    <property type="project" value="TAIR"/>
</dbReference>
<dbReference type="CDD" id="cd22162">
    <property type="entry name" value="F-box_AtSKIP3-like"/>
    <property type="match status" value="1"/>
</dbReference>
<dbReference type="InterPro" id="IPR036047">
    <property type="entry name" value="F-box-like_dom_sf"/>
</dbReference>
<dbReference type="InterPro" id="IPR025886">
    <property type="entry name" value="PP2-like"/>
</dbReference>
<dbReference type="PANTHER" id="PTHR32278">
    <property type="entry name" value="F-BOX DOMAIN-CONTAINING PROTEIN"/>
    <property type="match status" value="1"/>
</dbReference>
<dbReference type="PANTHER" id="PTHR32278:SF57">
    <property type="entry name" value="F-BOX PROTEIN PP2-B2-RELATED"/>
    <property type="match status" value="1"/>
</dbReference>
<dbReference type="Pfam" id="PF14299">
    <property type="entry name" value="PP2"/>
    <property type="match status" value="1"/>
</dbReference>
<dbReference type="SUPFAM" id="SSF81383">
    <property type="entry name" value="F-box domain"/>
    <property type="match status" value="1"/>
</dbReference>
<feature type="chain" id="PRO_0000272214" description="F-box protein PP2-B5">
    <location>
        <begin position="1"/>
        <end position="284"/>
    </location>
</feature>
<feature type="domain" description="F-box">
    <location>
        <begin position="32"/>
        <end position="80"/>
    </location>
</feature>
<gene>
    <name type="primary">PP2B5</name>
    <name type="ordered locus">At2g02300</name>
    <name type="ORF">T16F16.9</name>
</gene>
<organism>
    <name type="scientific">Arabidopsis thaliana</name>
    <name type="common">Mouse-ear cress</name>
    <dbReference type="NCBI Taxonomy" id="3702"/>
    <lineage>
        <taxon>Eukaryota</taxon>
        <taxon>Viridiplantae</taxon>
        <taxon>Streptophyta</taxon>
        <taxon>Embryophyta</taxon>
        <taxon>Tracheophyta</taxon>
        <taxon>Spermatophyta</taxon>
        <taxon>Magnoliopsida</taxon>
        <taxon>eudicotyledons</taxon>
        <taxon>Gunneridae</taxon>
        <taxon>Pentapetalae</taxon>
        <taxon>rosids</taxon>
        <taxon>malvids</taxon>
        <taxon>Brassicales</taxon>
        <taxon>Brassicaceae</taxon>
        <taxon>Camelineae</taxon>
        <taxon>Arabidopsis</taxon>
    </lineage>
</organism>
<proteinExistence type="evidence at transcript level"/>
<sequence>MGQKHGVDTRGKGAEFCGCWEILTEFINGSSASFDDLPDDCLAIISSFTSTPRDAFLAALVSKSFGLQFNSDSVWEKFLPPPDYVSLLPKSRVFSSKKELYFALCDPFPNHNGKMSFRLDKASGKKCVMLSAKKLLISRVVNPKYWKWISIPESRFDEVPELLNIDSFDIRGVLNTRIISPGTHYSAYIVYTKTSHFNGFQTSPIQAGVGFQRHGMSKTFIRFDSKKRQDGWMEAKIGDFYNEGGLIGFNLIEVSVVDVARYPHMNMKSGLIIEGIEFRPKDSR</sequence>
<keyword id="KW-1185">Reference proteome</keyword>
<accession>Q9ZVR1</accession>
<reference key="1">
    <citation type="journal article" date="1999" name="Nature">
        <title>Sequence and analysis of chromosome 2 of the plant Arabidopsis thaliana.</title>
        <authorList>
            <person name="Lin X."/>
            <person name="Kaul S."/>
            <person name="Rounsley S.D."/>
            <person name="Shea T.P."/>
            <person name="Benito M.-I."/>
            <person name="Town C.D."/>
            <person name="Fujii C.Y."/>
            <person name="Mason T.M."/>
            <person name="Bowman C.L."/>
            <person name="Barnstead M.E."/>
            <person name="Feldblyum T.V."/>
            <person name="Buell C.R."/>
            <person name="Ketchum K.A."/>
            <person name="Lee J.J."/>
            <person name="Ronning C.M."/>
            <person name="Koo H.L."/>
            <person name="Moffat K.S."/>
            <person name="Cronin L.A."/>
            <person name="Shen M."/>
            <person name="Pai G."/>
            <person name="Van Aken S."/>
            <person name="Umayam L."/>
            <person name="Tallon L.J."/>
            <person name="Gill J.E."/>
            <person name="Adams M.D."/>
            <person name="Carrera A.J."/>
            <person name="Creasy T.H."/>
            <person name="Goodman H.M."/>
            <person name="Somerville C.R."/>
            <person name="Copenhaver G.P."/>
            <person name="Preuss D."/>
            <person name="Nierman W.C."/>
            <person name="White O."/>
            <person name="Eisen J.A."/>
            <person name="Salzberg S.L."/>
            <person name="Fraser C.M."/>
            <person name="Venter J.C."/>
        </authorList>
    </citation>
    <scope>NUCLEOTIDE SEQUENCE [LARGE SCALE GENOMIC DNA]</scope>
    <source>
        <strain>cv. Columbia</strain>
    </source>
</reference>
<reference key="2">
    <citation type="journal article" date="2017" name="Plant J.">
        <title>Araport11: a complete reannotation of the Arabidopsis thaliana reference genome.</title>
        <authorList>
            <person name="Cheng C.Y."/>
            <person name="Krishnakumar V."/>
            <person name="Chan A.P."/>
            <person name="Thibaud-Nissen F."/>
            <person name="Schobel S."/>
            <person name="Town C.D."/>
        </authorList>
    </citation>
    <scope>GENOME REANNOTATION</scope>
    <source>
        <strain>cv. Columbia</strain>
    </source>
</reference>
<reference key="3">
    <citation type="journal article" date="2005" name="Plant Physiol.">
        <title>Analysis of the cDNAs of hypothetical genes on Arabidopsis chromosome 2 reveals numerous transcript variants.</title>
        <authorList>
            <person name="Xiao Y.-L."/>
            <person name="Smith S.R."/>
            <person name="Ishmael N."/>
            <person name="Redman J.C."/>
            <person name="Kumar N."/>
            <person name="Monaghan E.L."/>
            <person name="Ayele M."/>
            <person name="Haas B.J."/>
            <person name="Wu H.C."/>
            <person name="Town C.D."/>
        </authorList>
    </citation>
    <scope>NUCLEOTIDE SEQUENCE [LARGE SCALE MRNA]</scope>
    <source>
        <strain>cv. Columbia</strain>
    </source>
</reference>
<reference key="4">
    <citation type="submission" date="2006-07" db="EMBL/GenBank/DDBJ databases">
        <title>Arabidopsis ORF clones.</title>
        <authorList>
            <person name="Quinitio C."/>
            <person name="Chen H."/>
            <person name="Kim C.J."/>
            <person name="Shinn P."/>
            <person name="Ecker J.R."/>
        </authorList>
    </citation>
    <scope>NUCLEOTIDE SEQUENCE [LARGE SCALE MRNA]</scope>
    <source>
        <strain>cv. Columbia</strain>
    </source>
</reference>
<reference key="5">
    <citation type="journal article" date="2003" name="Plant Physiol.">
        <title>Diversity of the superfamily of phloem lectins (phloem protein 2) in angiosperms.</title>
        <authorList>
            <person name="Dinant S."/>
            <person name="Clark A.M."/>
            <person name="Zhu Y."/>
            <person name="Vilaine F."/>
            <person name="Palauqui J.-C."/>
            <person name="Kusiak C."/>
            <person name="Thompson G.A."/>
        </authorList>
    </citation>
    <scope>GENE FAMILY</scope>
    <scope>NOMENCLATURE</scope>
</reference>
<protein>
    <recommendedName>
        <fullName>F-box protein PP2-B5</fullName>
    </recommendedName>
    <alternativeName>
        <fullName>Protein PHLOEM PROTEIN 2-LIKE B5</fullName>
        <shortName>AtPP2-B5</shortName>
    </alternativeName>
</protein>
<name>PP2B5_ARATH</name>